<name>RS15_MYCA9</name>
<dbReference type="EMBL" id="CU458896">
    <property type="protein sequence ID" value="CAM63185.1"/>
    <property type="molecule type" value="Genomic_DNA"/>
</dbReference>
<dbReference type="RefSeq" id="WP_005057119.1">
    <property type="nucleotide sequence ID" value="NZ_MLCG01000003.1"/>
</dbReference>
<dbReference type="SMR" id="B1MD64"/>
<dbReference type="GeneID" id="93380040"/>
<dbReference type="KEGG" id="mab:MAB_3108c"/>
<dbReference type="Proteomes" id="UP000007137">
    <property type="component" value="Chromosome"/>
</dbReference>
<dbReference type="GO" id="GO:0022627">
    <property type="term" value="C:cytosolic small ribosomal subunit"/>
    <property type="evidence" value="ECO:0007669"/>
    <property type="project" value="TreeGrafter"/>
</dbReference>
<dbReference type="GO" id="GO:0019843">
    <property type="term" value="F:rRNA binding"/>
    <property type="evidence" value="ECO:0007669"/>
    <property type="project" value="UniProtKB-UniRule"/>
</dbReference>
<dbReference type="GO" id="GO:0003735">
    <property type="term" value="F:structural constituent of ribosome"/>
    <property type="evidence" value="ECO:0007669"/>
    <property type="project" value="InterPro"/>
</dbReference>
<dbReference type="GO" id="GO:0006412">
    <property type="term" value="P:translation"/>
    <property type="evidence" value="ECO:0007669"/>
    <property type="project" value="UniProtKB-UniRule"/>
</dbReference>
<dbReference type="CDD" id="cd00353">
    <property type="entry name" value="Ribosomal_S15p_S13e"/>
    <property type="match status" value="1"/>
</dbReference>
<dbReference type="FunFam" id="1.10.287.10:FF:000002">
    <property type="entry name" value="30S ribosomal protein S15"/>
    <property type="match status" value="1"/>
</dbReference>
<dbReference type="Gene3D" id="6.10.250.3130">
    <property type="match status" value="1"/>
</dbReference>
<dbReference type="Gene3D" id="1.10.287.10">
    <property type="entry name" value="S15/NS1, RNA-binding"/>
    <property type="match status" value="1"/>
</dbReference>
<dbReference type="HAMAP" id="MF_01343_B">
    <property type="entry name" value="Ribosomal_uS15_B"/>
    <property type="match status" value="1"/>
</dbReference>
<dbReference type="InterPro" id="IPR000589">
    <property type="entry name" value="Ribosomal_uS15"/>
</dbReference>
<dbReference type="InterPro" id="IPR005290">
    <property type="entry name" value="Ribosomal_uS15_bac-type"/>
</dbReference>
<dbReference type="InterPro" id="IPR009068">
    <property type="entry name" value="uS15_NS1_RNA-bd_sf"/>
</dbReference>
<dbReference type="NCBIfam" id="TIGR00952">
    <property type="entry name" value="S15_bact"/>
    <property type="match status" value="1"/>
</dbReference>
<dbReference type="PANTHER" id="PTHR23321">
    <property type="entry name" value="RIBOSOMAL PROTEIN S15, BACTERIAL AND ORGANELLAR"/>
    <property type="match status" value="1"/>
</dbReference>
<dbReference type="PANTHER" id="PTHR23321:SF26">
    <property type="entry name" value="SMALL RIBOSOMAL SUBUNIT PROTEIN US15M"/>
    <property type="match status" value="1"/>
</dbReference>
<dbReference type="Pfam" id="PF00312">
    <property type="entry name" value="Ribosomal_S15"/>
    <property type="match status" value="1"/>
</dbReference>
<dbReference type="SMART" id="SM01387">
    <property type="entry name" value="Ribosomal_S15"/>
    <property type="match status" value="1"/>
</dbReference>
<dbReference type="SUPFAM" id="SSF47060">
    <property type="entry name" value="S15/NS1 RNA-binding domain"/>
    <property type="match status" value="1"/>
</dbReference>
<dbReference type="PROSITE" id="PS00362">
    <property type="entry name" value="RIBOSOMAL_S15"/>
    <property type="match status" value="1"/>
</dbReference>
<evidence type="ECO:0000255" key="1">
    <source>
        <dbReference type="HAMAP-Rule" id="MF_01343"/>
    </source>
</evidence>
<evidence type="ECO:0000305" key="2"/>
<sequence length="89" mass="10409">MSLTTEQKKEILAQYGLHETDTGSPEAQVAMLTKRIVDLTEHLKTHKHDHHSRRGLLLLVGRRRRLLKYVAKVDVARYRSLIERLGLRR</sequence>
<gene>
    <name evidence="1" type="primary">rpsO</name>
    <name type="ordered locus">MAB_3108c</name>
</gene>
<comment type="function">
    <text evidence="1">One of the primary rRNA binding proteins, it binds directly to 16S rRNA where it helps nucleate assembly of the platform of the 30S subunit by binding and bridging several RNA helices of the 16S rRNA.</text>
</comment>
<comment type="function">
    <text evidence="1">Forms an intersubunit bridge (bridge B4) with the 23S rRNA of the 50S subunit in the ribosome.</text>
</comment>
<comment type="subunit">
    <text evidence="1">Part of the 30S ribosomal subunit. Forms a bridge to the 50S subunit in the 70S ribosome, contacting the 23S rRNA.</text>
</comment>
<comment type="similarity">
    <text evidence="1">Belongs to the universal ribosomal protein uS15 family.</text>
</comment>
<accession>B1MD64</accession>
<keyword id="KW-1185">Reference proteome</keyword>
<keyword id="KW-0687">Ribonucleoprotein</keyword>
<keyword id="KW-0689">Ribosomal protein</keyword>
<keyword id="KW-0694">RNA-binding</keyword>
<keyword id="KW-0699">rRNA-binding</keyword>
<proteinExistence type="inferred from homology"/>
<organism>
    <name type="scientific">Mycobacteroides abscessus (strain ATCC 19977 / DSM 44196 / CCUG 20993 / CIP 104536 / JCM 13569 / NCTC 13031 / TMC 1543 / L948)</name>
    <name type="common">Mycobacterium abscessus</name>
    <dbReference type="NCBI Taxonomy" id="561007"/>
    <lineage>
        <taxon>Bacteria</taxon>
        <taxon>Bacillati</taxon>
        <taxon>Actinomycetota</taxon>
        <taxon>Actinomycetes</taxon>
        <taxon>Mycobacteriales</taxon>
        <taxon>Mycobacteriaceae</taxon>
        <taxon>Mycobacteroides</taxon>
        <taxon>Mycobacteroides abscessus</taxon>
    </lineage>
</organism>
<protein>
    <recommendedName>
        <fullName evidence="1">Small ribosomal subunit protein uS15</fullName>
    </recommendedName>
    <alternativeName>
        <fullName evidence="2">30S ribosomal protein S15</fullName>
    </alternativeName>
</protein>
<feature type="chain" id="PRO_1000143142" description="Small ribosomal subunit protein uS15">
    <location>
        <begin position="1"/>
        <end position="89"/>
    </location>
</feature>
<reference key="1">
    <citation type="journal article" date="2009" name="PLoS ONE">
        <title>Non mycobacterial virulence genes in the genome of the emerging pathogen Mycobacterium abscessus.</title>
        <authorList>
            <person name="Ripoll F."/>
            <person name="Pasek S."/>
            <person name="Schenowitz C."/>
            <person name="Dossat C."/>
            <person name="Barbe V."/>
            <person name="Rottman M."/>
            <person name="Macheras E."/>
            <person name="Heym B."/>
            <person name="Herrmann J.L."/>
            <person name="Daffe M."/>
            <person name="Brosch R."/>
            <person name="Risler J.L."/>
            <person name="Gaillard J.L."/>
        </authorList>
    </citation>
    <scope>NUCLEOTIDE SEQUENCE [LARGE SCALE GENOMIC DNA]</scope>
    <source>
        <strain>ATCC 19977 / DSM 44196 / CCUG 20993 / CIP 104536 / JCM 13569 / NCTC 13031 / TMC 1543 / L948</strain>
    </source>
</reference>